<accession>Q15517</accession>
<accession>B0S7V2</accession>
<accession>B0UYZ7</accession>
<accession>G8JLG2</accession>
<accession>O43509</accession>
<accession>Q5SQ85</accession>
<accession>Q5STD2</accession>
<accession>Q7LA70</accession>
<accession>Q7LA71</accession>
<accession>Q86Z04</accession>
<accession>Q8IZU4</accession>
<accession>Q8IZU5</accession>
<accession>Q8IZU6</accession>
<accession>Q8N5P3</accession>
<accession>Q95IF9</accession>
<accession>Q9NP52</accession>
<accession>Q9NPE0</accession>
<accession>Q9NPG5</accession>
<accession>Q9NRH4</accession>
<accession>Q9NRH5</accession>
<accession>Q9NRH6</accession>
<accession>Q9NRH7</accession>
<accession>Q9NRH8</accession>
<accession>Q9UBH8</accession>
<accession>Q9UIN6</accession>
<accession>Q9UIN7</accession>
<accession>Q9UIN8</accession>
<accession>Q9UIN9</accession>
<accession>Q9UIP0</accession>
<dbReference type="EMBL" id="L20815">
    <property type="protein sequence ID" value="AAA21321.1"/>
    <property type="status" value="ALT_SEQ"/>
    <property type="molecule type" value="mRNA"/>
</dbReference>
<dbReference type="EMBL" id="AF030130">
    <property type="protein sequence ID" value="AAC24196.1"/>
    <property type="molecule type" value="mRNA"/>
</dbReference>
<dbReference type="EMBL" id="AF491328">
    <property type="protein sequence ID" value="AAN70995.1"/>
    <property type="molecule type" value="Genomic_DNA"/>
</dbReference>
<dbReference type="EMBL" id="AF491327">
    <property type="protein sequence ID" value="AAN70995.1"/>
    <property type="status" value="JOINED"/>
    <property type="molecule type" value="Genomic_DNA"/>
</dbReference>
<dbReference type="EMBL" id="AF491330">
    <property type="protein sequence ID" value="AAN70996.1"/>
    <property type="molecule type" value="Genomic_DNA"/>
</dbReference>
<dbReference type="EMBL" id="AF491329">
    <property type="protein sequence ID" value="AAN70996.1"/>
    <property type="status" value="JOINED"/>
    <property type="molecule type" value="Genomic_DNA"/>
</dbReference>
<dbReference type="EMBL" id="AF491326">
    <property type="protein sequence ID" value="AAN70994.1"/>
    <property type="molecule type" value="Genomic_DNA"/>
</dbReference>
<dbReference type="EMBL" id="AF491325">
    <property type="protein sequence ID" value="AAN70994.1"/>
    <property type="status" value="JOINED"/>
    <property type="molecule type" value="Genomic_DNA"/>
</dbReference>
<dbReference type="EMBL" id="KY500785">
    <property type="protein sequence ID" value="AQY77255.1"/>
    <property type="molecule type" value="Genomic_DNA"/>
</dbReference>
<dbReference type="EMBL" id="AL662844">
    <property type="status" value="NOT_ANNOTATED_CDS"/>
    <property type="molecule type" value="Genomic_DNA"/>
</dbReference>
<dbReference type="EMBL" id="AL662867">
    <property type="status" value="NOT_ANNOTATED_CDS"/>
    <property type="molecule type" value="Genomic_DNA"/>
</dbReference>
<dbReference type="EMBL" id="AL773544">
    <property type="status" value="NOT_ANNOTATED_CDS"/>
    <property type="molecule type" value="Genomic_DNA"/>
</dbReference>
<dbReference type="EMBL" id="BX927139">
    <property type="status" value="NOT_ANNOTATED_CDS"/>
    <property type="molecule type" value="Genomic_DNA"/>
</dbReference>
<dbReference type="EMBL" id="CR759805">
    <property type="status" value="NOT_ANNOTATED_CDS"/>
    <property type="molecule type" value="Genomic_DNA"/>
</dbReference>
<dbReference type="EMBL" id="CR753819">
    <property type="status" value="NOT_ANNOTATED_CDS"/>
    <property type="molecule type" value="Genomic_DNA"/>
</dbReference>
<dbReference type="EMBL" id="CH471081">
    <property type="protein sequence ID" value="EAX03358.1"/>
    <property type="molecule type" value="Genomic_DNA"/>
</dbReference>
<dbReference type="EMBL" id="BA000025">
    <property type="protein sequence ID" value="BAB63316.1"/>
    <property type="status" value="ALT_INIT"/>
    <property type="molecule type" value="Genomic_DNA"/>
</dbReference>
<dbReference type="EMBL" id="AB088114">
    <property type="protein sequence ID" value="BAC54948.1"/>
    <property type="status" value="ALT_INIT"/>
    <property type="molecule type" value="Genomic_DNA"/>
</dbReference>
<dbReference type="EMBL" id="BC031993">
    <property type="protein sequence ID" value="AAH31993.1"/>
    <property type="molecule type" value="mRNA"/>
</dbReference>
<dbReference type="EMBL" id="AF224747">
    <property type="protein sequence ID" value="AAF78559.1"/>
    <property type="molecule type" value="Genomic_DNA"/>
</dbReference>
<dbReference type="EMBL" id="AF224748">
    <property type="protein sequence ID" value="AAF78560.1"/>
    <property type="molecule type" value="Genomic_DNA"/>
</dbReference>
<dbReference type="EMBL" id="AF224749">
    <property type="protein sequence ID" value="AAF78561.1"/>
    <property type="molecule type" value="Genomic_DNA"/>
</dbReference>
<dbReference type="EMBL" id="AF224750">
    <property type="protein sequence ID" value="AAF78562.1"/>
    <property type="molecule type" value="Genomic_DNA"/>
</dbReference>
<dbReference type="EMBL" id="AF224751">
    <property type="protein sequence ID" value="AAF78563.1"/>
    <property type="molecule type" value="Genomic_DNA"/>
</dbReference>
<dbReference type="EMBL" id="AF224752">
    <property type="protein sequence ID" value="AAF78564.1"/>
    <property type="molecule type" value="Genomic_DNA"/>
</dbReference>
<dbReference type="EMBL" id="AF224753">
    <property type="protein sequence ID" value="AAF78565.1"/>
    <property type="molecule type" value="Genomic_DNA"/>
</dbReference>
<dbReference type="EMBL" id="AF224754">
    <property type="protein sequence ID" value="AAF78566.1"/>
    <property type="molecule type" value="Genomic_DNA"/>
</dbReference>
<dbReference type="EMBL" id="AF224755">
    <property type="protein sequence ID" value="AAF78567.1"/>
    <property type="molecule type" value="Genomic_DNA"/>
</dbReference>
<dbReference type="EMBL" id="AF224756">
    <property type="protein sequence ID" value="AAF78568.1"/>
    <property type="molecule type" value="Genomic_DNA"/>
</dbReference>
<dbReference type="EMBL" id="AF224757">
    <property type="protein sequence ID" value="AAF78569.1"/>
    <property type="molecule type" value="Genomic_DNA"/>
</dbReference>
<dbReference type="EMBL" id="AF224758">
    <property type="protein sequence ID" value="AAF78570.1"/>
    <property type="molecule type" value="Genomic_DNA"/>
</dbReference>
<dbReference type="EMBL" id="AF286165">
    <property type="protein sequence ID" value="AAG02419.1"/>
    <property type="molecule type" value="Genomic_DNA"/>
</dbReference>
<dbReference type="EMBL" id="AJ238461">
    <property type="protein sequence ID" value="CAB57266.1"/>
    <property type="molecule type" value="Genomic_DNA"/>
</dbReference>
<dbReference type="EMBL" id="AJ238462">
    <property type="protein sequence ID" value="CAB57267.1"/>
    <property type="molecule type" value="Genomic_DNA"/>
</dbReference>
<dbReference type="EMBL" id="AJ238463">
    <property type="protein sequence ID" value="CAB57268.1"/>
    <property type="molecule type" value="Genomic_DNA"/>
</dbReference>
<dbReference type="EMBL" id="AJ238464">
    <property type="protein sequence ID" value="CAB57269.1"/>
    <property type="molecule type" value="Genomic_DNA"/>
</dbReference>
<dbReference type="EMBL" id="AJ238465">
    <property type="protein sequence ID" value="CAB57270.1"/>
    <property type="molecule type" value="Genomic_DNA"/>
</dbReference>
<dbReference type="EMBL" id="AJ238466">
    <property type="protein sequence ID" value="CAB57271.1"/>
    <property type="molecule type" value="Genomic_DNA"/>
</dbReference>
<dbReference type="EMBL" id="AJ238467">
    <property type="protein sequence ID" value="CAB57272.1"/>
    <property type="molecule type" value="Genomic_DNA"/>
</dbReference>
<dbReference type="CCDS" id="CCDS34389.1"/>
<dbReference type="PIR" id="A48679">
    <property type="entry name" value="A48679"/>
</dbReference>
<dbReference type="RefSeq" id="NP_001255.3">
    <property type="nucleotide sequence ID" value="NM_001264.4"/>
</dbReference>
<dbReference type="SMR" id="Q15517"/>
<dbReference type="BioGRID" id="107472">
    <property type="interactions" value="167"/>
</dbReference>
<dbReference type="FunCoup" id="Q15517">
    <property type="interactions" value="229"/>
</dbReference>
<dbReference type="IntAct" id="Q15517">
    <property type="interactions" value="59"/>
</dbReference>
<dbReference type="MINT" id="Q15517"/>
<dbReference type="STRING" id="9606.ENSP00000365465"/>
<dbReference type="GlyCosmos" id="Q15517">
    <property type="glycosylation" value="1 site, No reported glycans"/>
</dbReference>
<dbReference type="GlyGen" id="Q15517">
    <property type="glycosylation" value="5 sites, 2 O-linked glycans (4 sites)"/>
</dbReference>
<dbReference type="iPTMnet" id="Q15517"/>
<dbReference type="PhosphoSitePlus" id="Q15517"/>
<dbReference type="SwissPalm" id="Q15517"/>
<dbReference type="BioMuta" id="CDSN"/>
<dbReference type="DMDM" id="296439412"/>
<dbReference type="jPOST" id="Q15517"/>
<dbReference type="MassIVE" id="Q15517"/>
<dbReference type="PaxDb" id="9606-ENSP00000365465"/>
<dbReference type="PeptideAtlas" id="Q15517"/>
<dbReference type="ProteomicsDB" id="34218"/>
<dbReference type="ProteomicsDB" id="60615"/>
<dbReference type="Antibodypedia" id="26774">
    <property type="antibodies" value="145 antibodies from 20 providers"/>
</dbReference>
<dbReference type="DNASU" id="1041"/>
<dbReference type="Ensembl" id="ENST00000259726.6">
    <property type="protein sequence ID" value="ENSP00000259726.6"/>
    <property type="gene ID" value="ENSG00000137197.6"/>
</dbReference>
<dbReference type="Ensembl" id="ENST00000376288.3">
    <property type="protein sequence ID" value="ENSP00000365465.2"/>
    <property type="gene ID" value="ENSG00000204539.4"/>
</dbReference>
<dbReference type="Ensembl" id="ENST00000418599.2">
    <property type="protein sequence ID" value="ENSP00000392863.2"/>
    <property type="gene ID" value="ENSG00000237123.2"/>
</dbReference>
<dbReference type="Ensembl" id="ENST00000445893.2">
    <property type="protein sequence ID" value="ENSP00000388386.2"/>
    <property type="gene ID" value="ENSG00000237114.2"/>
</dbReference>
<dbReference type="Ensembl" id="ENST00000457875.2">
    <property type="protein sequence ID" value="ENSP00000399604.2"/>
    <property type="gene ID" value="ENSG00000237165.2"/>
</dbReference>
<dbReference type="GeneID" id="1041"/>
<dbReference type="KEGG" id="hsa:1041"/>
<dbReference type="MANE-Select" id="ENST00000376288.3">
    <property type="protein sequence ID" value="ENSP00000365465.2"/>
    <property type="RefSeq nucleotide sequence ID" value="NM_001264.5"/>
    <property type="RefSeq protein sequence ID" value="NP_001255.4"/>
</dbReference>
<dbReference type="UCSC" id="uc011fbm.3">
    <property type="organism name" value="human"/>
</dbReference>
<dbReference type="AGR" id="HGNC:1802"/>
<dbReference type="CTD" id="1041"/>
<dbReference type="DisGeNET" id="1041"/>
<dbReference type="GeneCards" id="CDSN"/>
<dbReference type="HGNC" id="HGNC:1802">
    <property type="gene designation" value="CDSN"/>
</dbReference>
<dbReference type="MalaCards" id="CDSN"/>
<dbReference type="MIM" id="146520">
    <property type="type" value="phenotype"/>
</dbReference>
<dbReference type="MIM" id="270300">
    <property type="type" value="phenotype"/>
</dbReference>
<dbReference type="MIM" id="602593">
    <property type="type" value="gene"/>
</dbReference>
<dbReference type="neXtProt" id="NX_Q15517"/>
<dbReference type="OpenTargets" id="ENSG00000204539"/>
<dbReference type="Orphanet" id="90368">
    <property type="disease" value="Hypotrichosis simplex of the scalp"/>
</dbReference>
<dbReference type="Orphanet" id="263553">
    <property type="disease" value="Peeling skin syndrome type B"/>
</dbReference>
<dbReference type="PharmGKB" id="PA26348"/>
<dbReference type="VEuPathDB" id="HostDB:ENSG00000204539"/>
<dbReference type="eggNOG" id="ENOG502SQ6F">
    <property type="taxonomic scope" value="Eukaryota"/>
</dbReference>
<dbReference type="GeneTree" id="ENSGT00730000111474"/>
<dbReference type="HOGENOM" id="CLU_039631_0_0_1"/>
<dbReference type="InParanoid" id="Q15517"/>
<dbReference type="OMA" id="RVGGHGM"/>
<dbReference type="OrthoDB" id="9634493at2759"/>
<dbReference type="PAN-GO" id="Q15517">
    <property type="GO annotations" value="2 GO annotations based on evolutionary models"/>
</dbReference>
<dbReference type="PhylomeDB" id="Q15517"/>
<dbReference type="PathwayCommons" id="Q15517"/>
<dbReference type="Reactome" id="R-HSA-6809371">
    <property type="pathway name" value="Formation of the cornified envelope"/>
</dbReference>
<dbReference type="SignaLink" id="Q15517"/>
<dbReference type="BioGRID-ORCS" id="1041">
    <property type="hits" value="10 hits in 1139 CRISPR screens"/>
</dbReference>
<dbReference type="GeneWiki" id="Corneodesmosin"/>
<dbReference type="GenomeRNAi" id="1041"/>
<dbReference type="Pharos" id="Q15517">
    <property type="development level" value="Tbio"/>
</dbReference>
<dbReference type="PRO" id="PR:Q15517"/>
<dbReference type="Proteomes" id="UP000005640">
    <property type="component" value="Chromosome 6"/>
</dbReference>
<dbReference type="RNAct" id="Q15517">
    <property type="molecule type" value="protein"/>
</dbReference>
<dbReference type="Bgee" id="ENSG00000204539">
    <property type="expression patterns" value="Expressed in skin of abdomen and 71 other cell types or tissues"/>
</dbReference>
<dbReference type="GO" id="GO:0005911">
    <property type="term" value="C:cell-cell junction"/>
    <property type="evidence" value="ECO:0000304"/>
    <property type="project" value="ProtInc"/>
</dbReference>
<dbReference type="GO" id="GO:0001533">
    <property type="term" value="C:cornified envelope"/>
    <property type="evidence" value="ECO:0000314"/>
    <property type="project" value="MGI"/>
</dbReference>
<dbReference type="GO" id="GO:0030057">
    <property type="term" value="C:desmosome"/>
    <property type="evidence" value="ECO:0000314"/>
    <property type="project" value="MGI"/>
</dbReference>
<dbReference type="GO" id="GO:0005576">
    <property type="term" value="C:extracellular region"/>
    <property type="evidence" value="ECO:0007669"/>
    <property type="project" value="UniProtKB-SubCell"/>
</dbReference>
<dbReference type="GO" id="GO:0005886">
    <property type="term" value="C:plasma membrane"/>
    <property type="evidence" value="ECO:0000304"/>
    <property type="project" value="Reactome"/>
</dbReference>
<dbReference type="GO" id="GO:0042803">
    <property type="term" value="F:protein homodimerization activity"/>
    <property type="evidence" value="ECO:0000314"/>
    <property type="project" value="MGI"/>
</dbReference>
<dbReference type="GO" id="GO:1990000">
    <property type="term" value="P:amyloid fibril formation"/>
    <property type="evidence" value="ECO:0000314"/>
    <property type="project" value="DisProt"/>
</dbReference>
<dbReference type="GO" id="GO:0007155">
    <property type="term" value="P:cell adhesion"/>
    <property type="evidence" value="ECO:0000304"/>
    <property type="project" value="ProtInc"/>
</dbReference>
<dbReference type="GO" id="GO:0098609">
    <property type="term" value="P:cell-cell adhesion"/>
    <property type="evidence" value="ECO:0000314"/>
    <property type="project" value="MGI"/>
</dbReference>
<dbReference type="GO" id="GO:0003336">
    <property type="term" value="P:corneocyte desquamation"/>
    <property type="evidence" value="ECO:0000315"/>
    <property type="project" value="CAFA"/>
</dbReference>
<dbReference type="GO" id="GO:0008544">
    <property type="term" value="P:epidermis development"/>
    <property type="evidence" value="ECO:0000304"/>
    <property type="project" value="ProtInc"/>
</dbReference>
<dbReference type="GO" id="GO:0030216">
    <property type="term" value="P:keratinocyte differentiation"/>
    <property type="evidence" value="ECO:0000303"/>
    <property type="project" value="UniProtKB"/>
</dbReference>
<dbReference type="GO" id="GO:1905716">
    <property type="term" value="P:negative regulation of cornification"/>
    <property type="evidence" value="ECO:0000315"/>
    <property type="project" value="CAFA"/>
</dbReference>
<dbReference type="GO" id="GO:0043589">
    <property type="term" value="P:skin morphogenesis"/>
    <property type="evidence" value="ECO:0000315"/>
    <property type="project" value="UniProtKB"/>
</dbReference>
<dbReference type="DisProt" id="DP00706"/>
<dbReference type="InterPro" id="IPR026087">
    <property type="entry name" value="Corneodesmosin"/>
</dbReference>
<dbReference type="PANTHER" id="PTHR23207">
    <property type="entry name" value="CORNEODESMOSIN"/>
    <property type="match status" value="1"/>
</dbReference>
<dbReference type="PANTHER" id="PTHR23207:SF2">
    <property type="entry name" value="CORNEODESMOSIN"/>
    <property type="match status" value="1"/>
</dbReference>
<reference key="1">
    <citation type="journal article" date="1993" name="Proc. Natl. Acad. Sci. U.S.A.">
        <title>Identification in the HLA class I region of a gene expressed late in keratinocyte differentiation.</title>
        <authorList>
            <person name="Zhou Y."/>
            <person name="Chaplin D.D."/>
        </authorList>
    </citation>
    <scope>NUCLEOTIDE SEQUENCE [MRNA]</scope>
    <scope>VARIANTS LEU-18; SER-143; SER-202 AND SER-410</scope>
    <source>
        <tissue>Foreskin</tissue>
    </source>
</reference>
<reference key="2">
    <citation type="journal article" date="1998" name="J. Biol. Chem.">
        <title>Expression cloning of human corneodesmosin proves its identity with the product of the S gene and allows improved characterization of its processing during keratinocyte differentiation.</title>
        <authorList>
            <person name="Guerrin M."/>
            <person name="Simon M."/>
            <person name="Montezin M."/>
            <person name="Haftek M."/>
            <person name="Vincent C."/>
            <person name="Serre G."/>
        </authorList>
    </citation>
    <scope>NUCLEOTIDE SEQUENCE [MRNA]</scope>
    <scope>VARIANTS SER-143; SER-202; ALA-408; SER-410 AND ASP-527</scope>
    <source>
        <tissue>Epidermis</tissue>
    </source>
</reference>
<reference key="3">
    <citation type="journal article" date="2002" name="Tissue Antigens">
        <title>Corneodesmosin DNA polymorphisms in MHC haplotypes and Japanese patients with psoriasis.</title>
        <authorList>
            <person name="Hui J."/>
            <person name="Oka A."/>
            <person name="Tamiya G."/>
            <person name="Tomizawa M."/>
            <person name="Kulski J.K."/>
            <person name="Penhale W.J."/>
            <person name="Tay G.K."/>
            <person name="Iizuka M."/>
            <person name="Ozawa A."/>
            <person name="Inoko H."/>
        </authorList>
    </citation>
    <scope>NUCLEOTIDE SEQUENCE [GENOMIC DNA]</scope>
    <scope>VARIANTS LEU-18; SER-143; SER-153 DEL; SER-202; SER-410 AND ASP-527</scope>
</reference>
<reference key="4">
    <citation type="submission" date="2017-05" db="EMBL/GenBank/DDBJ databases">
        <title>CDS alleles of MHC region genes derived from homozygous individuals.</title>
        <authorList>
            <person name="Norman P.J."/>
            <person name="Norberg S.J."/>
            <person name="Nemat-Gorgani N."/>
            <person name="Ronaghi M."/>
            <person name="Parham P."/>
        </authorList>
    </citation>
    <scope>NUCLEOTIDE SEQUENCE [GENOMIC DNA]</scope>
</reference>
<reference key="5">
    <citation type="journal article" date="2006" name="Genetics">
        <title>Rapid evolution of major histocompatibility complex class I genes in primates generates new disease alleles in humans via hitchhiking diversity.</title>
        <authorList>
            <person name="Shiina T."/>
            <person name="Ota M."/>
            <person name="Shimizu S."/>
            <person name="Katsuyama Y."/>
            <person name="Hashimoto N."/>
            <person name="Takasu M."/>
            <person name="Anzai T."/>
            <person name="Kulski J.K."/>
            <person name="Kikkawa E."/>
            <person name="Naruse T."/>
            <person name="Kimura N."/>
            <person name="Yanagiya K."/>
            <person name="Watanabe A."/>
            <person name="Hosomichi K."/>
            <person name="Kohara S."/>
            <person name="Iwamoto C."/>
            <person name="Umehara Y."/>
            <person name="Meyer A."/>
            <person name="Wanner V."/>
            <person name="Sano K."/>
            <person name="Macquin C."/>
            <person name="Ikeo K."/>
            <person name="Tokunaga K."/>
            <person name="Gojobori T."/>
            <person name="Inoko H."/>
            <person name="Bahram S."/>
        </authorList>
    </citation>
    <scope>NUCLEOTIDE SEQUENCE [LARGE SCALE GENOMIC DNA]</scope>
    <scope>VARIANTS SER-143; SER-202; SER-410 AND ASP-527</scope>
</reference>
<reference key="6">
    <citation type="journal article" date="2003" name="Nature">
        <title>The DNA sequence and analysis of human chromosome 6.</title>
        <authorList>
            <person name="Mungall A.J."/>
            <person name="Palmer S.A."/>
            <person name="Sims S.K."/>
            <person name="Edwards C.A."/>
            <person name="Ashurst J.L."/>
            <person name="Wilming L."/>
            <person name="Jones M.C."/>
            <person name="Horton R."/>
            <person name="Hunt S.E."/>
            <person name="Scott C.E."/>
            <person name="Gilbert J.G.R."/>
            <person name="Clamp M.E."/>
            <person name="Bethel G."/>
            <person name="Milne S."/>
            <person name="Ainscough R."/>
            <person name="Almeida J.P."/>
            <person name="Ambrose K.D."/>
            <person name="Andrews T.D."/>
            <person name="Ashwell R.I.S."/>
            <person name="Babbage A.K."/>
            <person name="Bagguley C.L."/>
            <person name="Bailey J."/>
            <person name="Banerjee R."/>
            <person name="Barker D.J."/>
            <person name="Barlow K.F."/>
            <person name="Bates K."/>
            <person name="Beare D.M."/>
            <person name="Beasley H."/>
            <person name="Beasley O."/>
            <person name="Bird C.P."/>
            <person name="Blakey S.E."/>
            <person name="Bray-Allen S."/>
            <person name="Brook J."/>
            <person name="Brown A.J."/>
            <person name="Brown J.Y."/>
            <person name="Burford D.C."/>
            <person name="Burrill W."/>
            <person name="Burton J."/>
            <person name="Carder C."/>
            <person name="Carter N.P."/>
            <person name="Chapman J.C."/>
            <person name="Clark S.Y."/>
            <person name="Clark G."/>
            <person name="Clee C.M."/>
            <person name="Clegg S."/>
            <person name="Cobley V."/>
            <person name="Collier R.E."/>
            <person name="Collins J.E."/>
            <person name="Colman L.K."/>
            <person name="Corby N.R."/>
            <person name="Coville G.J."/>
            <person name="Culley K.M."/>
            <person name="Dhami P."/>
            <person name="Davies J."/>
            <person name="Dunn M."/>
            <person name="Earthrowl M.E."/>
            <person name="Ellington A.E."/>
            <person name="Evans K.A."/>
            <person name="Faulkner L."/>
            <person name="Francis M.D."/>
            <person name="Frankish A."/>
            <person name="Frankland J."/>
            <person name="French L."/>
            <person name="Garner P."/>
            <person name="Garnett J."/>
            <person name="Ghori M.J."/>
            <person name="Gilby L.M."/>
            <person name="Gillson C.J."/>
            <person name="Glithero R.J."/>
            <person name="Grafham D.V."/>
            <person name="Grant M."/>
            <person name="Gribble S."/>
            <person name="Griffiths C."/>
            <person name="Griffiths M.N.D."/>
            <person name="Hall R."/>
            <person name="Halls K.S."/>
            <person name="Hammond S."/>
            <person name="Harley J.L."/>
            <person name="Hart E.A."/>
            <person name="Heath P.D."/>
            <person name="Heathcott R."/>
            <person name="Holmes S.J."/>
            <person name="Howden P.J."/>
            <person name="Howe K.L."/>
            <person name="Howell G.R."/>
            <person name="Huckle E."/>
            <person name="Humphray S.J."/>
            <person name="Humphries M.D."/>
            <person name="Hunt A.R."/>
            <person name="Johnson C.M."/>
            <person name="Joy A.A."/>
            <person name="Kay M."/>
            <person name="Keenan S.J."/>
            <person name="Kimberley A.M."/>
            <person name="King A."/>
            <person name="Laird G.K."/>
            <person name="Langford C."/>
            <person name="Lawlor S."/>
            <person name="Leongamornlert D.A."/>
            <person name="Leversha M."/>
            <person name="Lloyd C.R."/>
            <person name="Lloyd D.M."/>
            <person name="Loveland J.E."/>
            <person name="Lovell J."/>
            <person name="Martin S."/>
            <person name="Mashreghi-Mohammadi M."/>
            <person name="Maslen G.L."/>
            <person name="Matthews L."/>
            <person name="McCann O.T."/>
            <person name="McLaren S.J."/>
            <person name="McLay K."/>
            <person name="McMurray A."/>
            <person name="Moore M.J.F."/>
            <person name="Mullikin J.C."/>
            <person name="Niblett D."/>
            <person name="Nickerson T."/>
            <person name="Novik K.L."/>
            <person name="Oliver K."/>
            <person name="Overton-Larty E.K."/>
            <person name="Parker A."/>
            <person name="Patel R."/>
            <person name="Pearce A.V."/>
            <person name="Peck A.I."/>
            <person name="Phillimore B.J.C.T."/>
            <person name="Phillips S."/>
            <person name="Plumb R.W."/>
            <person name="Porter K.M."/>
            <person name="Ramsey Y."/>
            <person name="Ranby S.A."/>
            <person name="Rice C.M."/>
            <person name="Ross M.T."/>
            <person name="Searle S.M."/>
            <person name="Sehra H.K."/>
            <person name="Sheridan E."/>
            <person name="Skuce C.D."/>
            <person name="Smith S."/>
            <person name="Smith M."/>
            <person name="Spraggon L."/>
            <person name="Squares S.L."/>
            <person name="Steward C.A."/>
            <person name="Sycamore N."/>
            <person name="Tamlyn-Hall G."/>
            <person name="Tester J."/>
            <person name="Theaker A.J."/>
            <person name="Thomas D.W."/>
            <person name="Thorpe A."/>
            <person name="Tracey A."/>
            <person name="Tromans A."/>
            <person name="Tubby B."/>
            <person name="Wall M."/>
            <person name="Wallis J.M."/>
            <person name="West A.P."/>
            <person name="White S.S."/>
            <person name="Whitehead S.L."/>
            <person name="Whittaker H."/>
            <person name="Wild A."/>
            <person name="Willey D.J."/>
            <person name="Wilmer T.E."/>
            <person name="Wood J.M."/>
            <person name="Wray P.W."/>
            <person name="Wyatt J.C."/>
            <person name="Young L."/>
            <person name="Younger R.M."/>
            <person name="Bentley D.R."/>
            <person name="Coulson A."/>
            <person name="Durbin R.M."/>
            <person name="Hubbard T."/>
            <person name="Sulston J.E."/>
            <person name="Dunham I."/>
            <person name="Rogers J."/>
            <person name="Beck S."/>
        </authorList>
    </citation>
    <scope>NUCLEOTIDE SEQUENCE [LARGE SCALE GENOMIC DNA]</scope>
</reference>
<reference key="7">
    <citation type="submission" date="2005-07" db="EMBL/GenBank/DDBJ databases">
        <authorList>
            <person name="Mural R.J."/>
            <person name="Istrail S."/>
            <person name="Sutton G.G."/>
            <person name="Florea L."/>
            <person name="Halpern A.L."/>
            <person name="Mobarry C.M."/>
            <person name="Lippert R."/>
            <person name="Walenz B."/>
            <person name="Shatkay H."/>
            <person name="Dew I."/>
            <person name="Miller J.R."/>
            <person name="Flanigan M.J."/>
            <person name="Edwards N.J."/>
            <person name="Bolanos R."/>
            <person name="Fasulo D."/>
            <person name="Halldorsson B.V."/>
            <person name="Hannenhalli S."/>
            <person name="Turner R."/>
            <person name="Yooseph S."/>
            <person name="Lu F."/>
            <person name="Nusskern D.R."/>
            <person name="Shue B.C."/>
            <person name="Zheng X.H."/>
            <person name="Zhong F."/>
            <person name="Delcher A.L."/>
            <person name="Huson D.H."/>
            <person name="Kravitz S.A."/>
            <person name="Mouchard L."/>
            <person name="Reinert K."/>
            <person name="Remington K.A."/>
            <person name="Clark A.G."/>
            <person name="Waterman M.S."/>
            <person name="Eichler E.E."/>
            <person name="Adams M.D."/>
            <person name="Hunkapiller M.W."/>
            <person name="Myers E.W."/>
            <person name="Venter J.C."/>
        </authorList>
    </citation>
    <scope>NUCLEOTIDE SEQUENCE [LARGE SCALE GENOMIC DNA]</scope>
    <scope>VARIANTS SER-143; SER-410 AND ASP-527</scope>
</reference>
<reference key="8">
    <citation type="journal article" date="2004" name="Genome Res.">
        <title>The status, quality, and expansion of the NIH full-length cDNA project: the Mammalian Gene Collection (MGC).</title>
        <authorList>
            <consortium name="The MGC Project Team"/>
        </authorList>
    </citation>
    <scope>NUCLEOTIDE SEQUENCE [LARGE SCALE MRNA]</scope>
    <scope>VARIANTS LEU-18; SER-143; SER-153 DEL AND ASP-527</scope>
    <source>
        <tissue>Skin</tissue>
    </source>
</reference>
<reference key="9">
    <citation type="journal article" date="2001" name="Tissue Antigens">
        <title>Identification of six novel polymorphisms in the human corneodesmosin gene.</title>
        <authorList>
            <person name="Guerrin M."/>
            <person name="Vincent C."/>
            <person name="Simon M."/>
            <person name="Ahnini R.T."/>
            <person name="Fort M."/>
            <person name="Serre G."/>
        </authorList>
    </citation>
    <scope>NUCLEOTIDE SEQUENCE [GENOMIC DNA] OF 30-529 (ALLELES 1.11; 1.21; 1.31; 1.32; 1.41; 1.42; 1.43; 1.51; 1.52; 2.11; 2.21; 2.22 AND 2.23)</scope>
    <scope>VARIANTS PHE-56; ASN-143 DEL; ASN-150; SER-202; GLY-401; ALA-408; SER-410 AND ASP-527</scope>
</reference>
<reference key="10">
    <citation type="journal article" date="1999" name="Tissue Antigens">
        <title>Corneodesmosin gene polymorphism demonstrates strong linkage disequilibrium with HLA and association with psoriasis vulgaris.</title>
        <authorList>
            <person name="Jenisch S."/>
            <person name="Koch S."/>
            <person name="Henseler T."/>
            <person name="Nair R.P."/>
            <person name="Elder J.T."/>
            <person name="Watts C.E."/>
            <person name="Westphal E."/>
            <person name="Voorhees J.J."/>
            <person name="Christophers E."/>
            <person name="Kroenke M."/>
        </authorList>
    </citation>
    <scope>NUCLEOTIDE SEQUENCE [GENOMIC DNA] OF 106-529</scope>
    <scope>VARIANTS SER-143; SER-202; GLY-401; ALA-408; SER-410 AND ASP-527</scope>
    <scope>ASSOCIATION WITH PSORIASIS</scope>
</reference>
<reference key="11">
    <citation type="journal article" date="1997" name="J. Biol. Chem.">
        <title>Characterization and purification of human corneodesmosin, an epidermal basic glycoprotein associated with corneocyte-specific modified desmosomes.</title>
        <authorList>
            <person name="Simon M."/>
            <person name="Montezin M."/>
            <person name="Guerrin M."/>
            <person name="Durieux J.-J."/>
            <person name="Serre G."/>
        </authorList>
    </citation>
    <scope>PARTIAL PROTEIN SEQUENCE</scope>
    <scope>CHARACTERIZATION</scope>
    <scope>VARIANT SER-143</scope>
</reference>
<reference key="12">
    <citation type="journal article" date="2003" name="Nat. Genet.">
        <title>Hypotrichosis simplex of the scalp is associated with nonsense mutations in CDSN encoding corneodesmosin.</title>
        <authorList>
            <person name="Levy-Nissenbaum E."/>
            <person name="Betz R.C."/>
            <person name="Frydman M."/>
            <person name="Simon M."/>
            <person name="Lahat H."/>
            <person name="Bakhan T."/>
            <person name="Goldman B."/>
            <person name="Bygum A."/>
            <person name="Pierick M."/>
            <person name="Hillmer A.M."/>
            <person name="Jonca N."/>
            <person name="Toribio J."/>
            <person name="Kruse R."/>
            <person name="Dewald G."/>
            <person name="Cichon S."/>
            <person name="Kubisch C."/>
            <person name="Guerrin M."/>
            <person name="Serre G."/>
            <person name="Nothen M.M."/>
            <person name="Pras E."/>
        </authorList>
    </citation>
    <scope>INVOLVEMENT IN HYPT2</scope>
</reference>
<reference key="13">
    <citation type="journal article" date="2010" name="Am. J. Hum. Genet.">
        <title>Loss of corneodesmosin leads to severe skin barrier defect, pruritus, and atopy: unraveling the peeling skin disease.</title>
        <authorList>
            <person name="Oji V."/>
            <person name="Eckl K.M."/>
            <person name="Aufenvenne K."/>
            <person name="Natebus M."/>
            <person name="Tarinski T."/>
            <person name="Ackermann K."/>
            <person name="Seller N."/>
            <person name="Metze D."/>
            <person name="Nurnberg G."/>
            <person name="Folster-Holst R."/>
            <person name="Schafer-Korting M."/>
            <person name="Hausser I."/>
            <person name="Traupe H."/>
            <person name="Hennies H.C."/>
        </authorList>
    </citation>
    <scope>FUNCTION</scope>
    <scope>INVOLVEMENT IN PSS1</scope>
</reference>
<reference key="14">
    <citation type="journal article" date="2000" name="J. Invest. Dermatol.">
        <title>S gene (Corneodesmosin) diversity and its relationship to psoriasis; high content of cSNP in the HLA-linked S gene.</title>
        <authorList>
            <person name="Enerbaeck C."/>
            <person name="Enlund F."/>
            <person name="Inerot A."/>
            <person name="Samuelsson L."/>
            <person name="Wahlstroem J."/>
            <person name="Swanbeck G."/>
            <person name="Martinsson T."/>
        </authorList>
    </citation>
    <scope>ASSOCIATION WITH PSORIASIS</scope>
</reference>
<reference key="15">
    <citation type="journal article" date="2002" name="Tissue Antigens">
        <title>Psoriasis is associated with a SNP haplotype of the corneodesmosin gene (CDSN).</title>
        <authorList>
            <person name="Orru S."/>
            <person name="Giuressi E."/>
            <person name="Casula M."/>
            <person name="Loizedda A."/>
            <person name="Murru R."/>
            <person name="Mulargia M."/>
            <person name="Masala M.V."/>
            <person name="Cerimele D."/>
            <person name="Zucca M."/>
            <person name="Aste N."/>
            <person name="Biggio P."/>
            <person name="Carcassi C."/>
            <person name="Contu L."/>
        </authorList>
    </citation>
    <scope>VARIANTS GLY-401 AND ALA-408</scope>
    <scope>ASSOCIATION WITH PSORIASIS</scope>
</reference>
<comment type="function">
    <text evidence="12">Important for the epidermal barrier integrity.</text>
</comment>
<comment type="subcellular location">
    <subcellularLocation>
        <location>Secreted</location>
    </subcellularLocation>
    <text>Found in corneodesmosomes, the intercellular structures that are involved in desquamation.</text>
</comment>
<comment type="tissue specificity">
    <text>Exclusively expressed in skin.</text>
</comment>
<comment type="polymorphism">
    <text evidence="3 4 5 7">Genetic variation in CDSN may be associated with susceptibility to psoriasis [MIM:177900] (PubMed:10599883, PubMed:10844560, PubMed:12472658). Various CDSN alleles are known including alleles 1.11, 1.21, 1.31, 1.32, 1.41, 1.42, 1.43, 1.51, 1.52, 2.11, 2.21, 2.22 and 2.23 (PubMed:11169256).</text>
</comment>
<comment type="disease" evidence="8">
    <disease id="DI-01802">
        <name>Hypotrichosis 2</name>
        <acronym>HYPT2</acronym>
        <description>A condition characterized by the presence of less than the normal amount of hair. Affected individuals have normal hair in early childhood but experience progressive hair loss limited to the scalp beginning in the middle of the first decade and almost complete baldness by the third decade. Body hair, beard, eyebrows, axillary hair, teeth, and nails develop normally. HYPT2 inheritance is autosomal dominant.</description>
        <dbReference type="MIM" id="146520"/>
    </disease>
    <text>The disease is caused by variants affecting the gene represented in this entry.</text>
</comment>
<comment type="disease" evidence="12">
    <disease id="DI-03006">
        <name>Peeling skin syndrome 1</name>
        <acronym>PSS1</acronym>
        <description>A genodermatosis characterized by generalized, continuous shedding of the outer layers of the epidermis. Two main PSS subtypes have been suggested. Patients with non-inflammatory PSS (type A) manifest white scaling, with painless and easy removal of the skin, irritation when in contact with water, dust and sand, and no history of erythema, pruritis or atopy. Inflammatory PSS (type B) is associated with generalized erythema, pruritus and atopy. It is an ichthyosiform erythroderma characterized by lifelong patchy peeling of the entire skin with onset at birth or shortly after. Several patients have been reported with high IgE levels.</description>
        <dbReference type="MIM" id="270300"/>
    </disease>
    <text evidence="12">The disease is caused by variants affecting the gene represented in this entry. CDNS mutations are responsible for generalized, inflammatory peeling skin syndrome type B (PubMed:20691404).</text>
</comment>
<comment type="sequence caution" evidence="17">
    <conflict type="frameshift">
        <sequence resource="EMBL-CDS" id="AAA21321"/>
    </conflict>
</comment>
<comment type="sequence caution" evidence="17">
    <conflict type="erroneous initiation">
        <sequence resource="EMBL-CDS" id="BAB63316"/>
    </conflict>
    <text>Truncated N-terminus.</text>
</comment>
<comment type="sequence caution" evidence="17">
    <conflict type="erroneous initiation">
        <sequence resource="EMBL-CDS" id="BAC54948"/>
    </conflict>
    <text>Truncated N-terminus.</text>
</comment>
<name>CDSN_HUMAN</name>
<protein>
    <recommendedName>
        <fullName>Corneodesmosin</fullName>
    </recommendedName>
    <alternativeName>
        <fullName>S protein</fullName>
    </alternativeName>
</protein>
<evidence type="ECO:0000255" key="1"/>
<evidence type="ECO:0000256" key="2">
    <source>
        <dbReference type="SAM" id="MobiDB-lite"/>
    </source>
</evidence>
<evidence type="ECO:0000269" key="3">
    <source>
    </source>
</evidence>
<evidence type="ECO:0000269" key="4">
    <source>
    </source>
</evidence>
<evidence type="ECO:0000269" key="5">
    <source>
    </source>
</evidence>
<evidence type="ECO:0000269" key="6">
    <source>
    </source>
</evidence>
<evidence type="ECO:0000269" key="7">
    <source>
    </source>
</evidence>
<evidence type="ECO:0000269" key="8">
    <source>
    </source>
</evidence>
<evidence type="ECO:0000269" key="9">
    <source>
    </source>
</evidence>
<evidence type="ECO:0000269" key="10">
    <source>
    </source>
</evidence>
<evidence type="ECO:0000269" key="11">
    <source>
    </source>
</evidence>
<evidence type="ECO:0000269" key="12">
    <source>
    </source>
</evidence>
<evidence type="ECO:0000269" key="13">
    <source>
    </source>
</evidence>
<evidence type="ECO:0000269" key="14">
    <source>
    </source>
</evidence>
<evidence type="ECO:0000269" key="15">
    <source>
    </source>
</evidence>
<evidence type="ECO:0000269" key="16">
    <source ref="7"/>
</evidence>
<evidence type="ECO:0000305" key="17"/>
<keyword id="KW-0903">Direct protein sequencing</keyword>
<keyword id="KW-0325">Glycoprotein</keyword>
<keyword id="KW-1063">Hypotrichosis</keyword>
<keyword id="KW-1267">Proteomics identification</keyword>
<keyword id="KW-1185">Reference proteome</keyword>
<keyword id="KW-0964">Secreted</keyword>
<keyword id="KW-0732">Signal</keyword>
<gene>
    <name type="primary">CDSN</name>
</gene>
<sequence length="529" mass="51607">MGSSRAPWMGRVGGHGMMALLLAGLLLPGTLAKSIGTFSDPCKDPTRITSPNDPCLTGKGDSSGFSSYSGSSSSGSSISSARSSGGGSSGSSSGSSIAQGGSAGSFKPGTGYSQVSYSSGSGSSLQGASGSSQLGSSSSHSGNSGSHSGSSSSHSSSSSSFQFSSSSFQVGNGSALPTNDNSYRGILNPSQPGQSSSSSQTFGVSSSGQSVSSNQRPCSSDIPDSPCSGGPIVSHSGPYIPSSHSVSGGQRPVVVVVDQHGSGAPGVVQGPPCSNGGLPGKPCPPITSVDKSYGGYEVVGGSSDSYLVPGMTYSKGKIYPVGYFTKENPVKGSPGVPSFAAGPPISEGKYFSSNPIIPSQSAASSAIAFQPVGTGGVQLCGGGSTGSKGPCSPSSSRVPSSSSISSSSGLPYHPCGSASQSPCSPPGTGSFSSSSSSQSSGKIILQPCGSKSSSSGHPCMSVSSLTLTGGPDGSPHPDPSAGAKPCGSSSAGKIPCRSIRDILAQVKPLGPQLADPEVFLPQGELLNSP</sequence>
<feature type="signal peptide" evidence="1">
    <location>
        <begin position="1"/>
        <end position="32"/>
    </location>
</feature>
<feature type="chain" id="PRO_0000020912" description="Corneodesmosin">
    <location>
        <begin position="33"/>
        <end position="529"/>
    </location>
</feature>
<feature type="region of interest" description="Disordered" evidence="2">
    <location>
        <begin position="38"/>
        <end position="248"/>
    </location>
</feature>
<feature type="region of interest" description="Disordered" evidence="2">
    <location>
        <begin position="383"/>
        <end position="492"/>
    </location>
</feature>
<feature type="compositionally biased region" description="Low complexity" evidence="2">
    <location>
        <begin position="58"/>
        <end position="83"/>
    </location>
</feature>
<feature type="compositionally biased region" description="Low complexity" evidence="2">
    <location>
        <begin position="90"/>
        <end position="100"/>
    </location>
</feature>
<feature type="compositionally biased region" description="Low complexity" evidence="2">
    <location>
        <begin position="111"/>
        <end position="175"/>
    </location>
</feature>
<feature type="compositionally biased region" description="Low complexity" evidence="2">
    <location>
        <begin position="189"/>
        <end position="231"/>
    </location>
</feature>
<feature type="compositionally biased region" description="Low complexity" evidence="2">
    <location>
        <begin position="392"/>
        <end position="408"/>
    </location>
</feature>
<feature type="compositionally biased region" description="Low complexity" evidence="2">
    <location>
        <begin position="426"/>
        <end position="441"/>
    </location>
</feature>
<feature type="compositionally biased region" description="Polar residues" evidence="2">
    <location>
        <begin position="449"/>
        <end position="467"/>
    </location>
</feature>
<feature type="glycosylation site" description="N-linked (GlcNAc...) asparagine" evidence="1">
    <location>
        <position position="172"/>
    </location>
</feature>
<feature type="sequence variant" id="VAR_022615" description="In dbSNP:rs3095318." evidence="6 9 10 13">
    <original>M</original>
    <variation>L</variation>
    <location>
        <position position="18"/>
    </location>
</feature>
<feature type="sequence variant" id="VAR_022637" description="In allele 1.31 and allele 1.32; dbSNP:rs7742033." evidence="5">
    <original>L</original>
    <variation>F</variation>
    <location>
        <position position="56"/>
    </location>
</feature>
<feature type="sequence variant" id="VAR_022616" description="In dbSNP:rs3130984." evidence="3 6 9 10 11 13 14 15 16">
    <original>N</original>
    <variation>S</variation>
    <location>
        <position position="143"/>
    </location>
</feature>
<feature type="sequence variant" id="VAR_022638" description="In allele 2.11." evidence="5">
    <location>
        <position position="143"/>
    </location>
</feature>
<feature type="sequence variant" id="VAR_046010" description="In dbSNP:rs6457328.">
    <original>G</original>
    <variation>S</variation>
    <location>
        <position position="145"/>
    </location>
</feature>
<feature type="sequence variant" id="VAR_022639" description="In allele 2.21, allele 2.22 and allele 2.23; dbSNP:rs1184132826." evidence="5">
    <original>S</original>
    <variation>N</variation>
    <location>
        <position position="150"/>
    </location>
</feature>
<feature type="sequence variant" id="VAR_022617" evidence="6 9 10">
    <location>
        <position position="153"/>
    </location>
</feature>
<feature type="sequence variant" id="VAR_022618" description="In allele 1.41, allele 1.42 and allele 1.43; dbSNP:rs707913." evidence="3 5 6 11 13 15">
    <original>F</original>
    <variation>S</variation>
    <location>
        <position position="202"/>
    </location>
</feature>
<feature type="sequence variant" id="VAR_022640" description="In allele 1.32.">
    <location>
        <position position="253"/>
    </location>
</feature>
<feature type="sequence variant" id="VAR_022641" description="In allele 1.21; dbSNP:rs33941312." evidence="3 5 7">
    <original>S</original>
    <variation>G</variation>
    <location>
        <position position="401"/>
    </location>
</feature>
<feature type="sequence variant" id="VAR_022619" description="In allele 1.51; dbSNP:rs1042127." evidence="3 5 7 9 15">
    <original>S</original>
    <variation>A</variation>
    <location>
        <position position="408"/>
    </location>
</feature>
<feature type="sequence variant" id="VAR_022620" description="In allele 1.11, allele 1.21, allele 1.31, allele 1.32, allele 1.41, allele 1.42, allele 1.43, allele 1.51 and allele 1.52; dbSNP:rs3132554." evidence="3 5 6 11 13 15 16">
    <original>L</original>
    <variation>S</variation>
    <location>
        <position position="410"/>
    </location>
</feature>
<feature type="sequence variant" id="VAR_022621" description="In allele 1.11, allele 1.21, allele 1.31, allele 1.32, allele 1.41, allele 1.42, allele 1.43, allele 1.51, allele 1.52 and allele 2.11; dbSNP:rs3130981." evidence="3 5 6 10 11 15 16">
    <original>N</original>
    <variation>D</variation>
    <location>
        <position position="527"/>
    </location>
</feature>
<feature type="sequence conflict" description="In Ref. 8; AAH31993." evidence="17" ref="8">
    <original>S</original>
    <variation>G</variation>
    <location>
        <position position="406"/>
    </location>
</feature>
<feature type="sequence conflict" description="In Ref. 3; AAN70995." evidence="17" ref="3">
    <original>S</original>
    <variation>N</variation>
    <location>
        <position position="453"/>
    </location>
</feature>
<proteinExistence type="evidence at protein level"/>
<organism>
    <name type="scientific">Homo sapiens</name>
    <name type="common">Human</name>
    <dbReference type="NCBI Taxonomy" id="9606"/>
    <lineage>
        <taxon>Eukaryota</taxon>
        <taxon>Metazoa</taxon>
        <taxon>Chordata</taxon>
        <taxon>Craniata</taxon>
        <taxon>Vertebrata</taxon>
        <taxon>Euteleostomi</taxon>
        <taxon>Mammalia</taxon>
        <taxon>Eutheria</taxon>
        <taxon>Euarchontoglires</taxon>
        <taxon>Primates</taxon>
        <taxon>Haplorrhini</taxon>
        <taxon>Catarrhini</taxon>
        <taxon>Hominidae</taxon>
        <taxon>Homo</taxon>
    </lineage>
</organism>